<proteinExistence type="predicted"/>
<gene>
    <name type="ORF">DDB_G0284781</name>
</gene>
<dbReference type="EMBL" id="AAFI02000071">
    <property type="protein sequence ID" value="EAL65043.1"/>
    <property type="molecule type" value="Genomic_DNA"/>
</dbReference>
<dbReference type="RefSeq" id="XP_638402.1">
    <property type="nucleotide sequence ID" value="XM_633310.1"/>
</dbReference>
<dbReference type="SMR" id="Q54P56"/>
<dbReference type="PaxDb" id="44689-DDB0186190"/>
<dbReference type="EnsemblProtists" id="EAL65043">
    <property type="protein sequence ID" value="EAL65043"/>
    <property type="gene ID" value="DDB_G0284781"/>
</dbReference>
<dbReference type="GeneID" id="8624772"/>
<dbReference type="KEGG" id="ddi:DDB_G0284781"/>
<dbReference type="dictyBase" id="DDB_G0284781"/>
<dbReference type="VEuPathDB" id="AmoebaDB:DDB_G0284781"/>
<dbReference type="HOGENOM" id="CLU_2054093_0_0_1"/>
<dbReference type="InParanoid" id="Q54P56"/>
<dbReference type="PRO" id="PR:Q54P56"/>
<dbReference type="Proteomes" id="UP000002195">
    <property type="component" value="Chromosome 4"/>
</dbReference>
<sequence>MDILNYIKKNLKIRIETTNQLNDALKNKNLCSVEFDNKETWLSNTPLEEPNAYKNITHPSQLDGLENGDYHISSNLVVSILKEKLKEIEQLKQIIKSKDYDINYISAYGERKYPNGSKNE</sequence>
<protein>
    <recommendedName>
        <fullName>Uncharacterized protein DDB_G0284781</fullName>
    </recommendedName>
</protein>
<reference key="1">
    <citation type="journal article" date="2005" name="Nature">
        <title>The genome of the social amoeba Dictyostelium discoideum.</title>
        <authorList>
            <person name="Eichinger L."/>
            <person name="Pachebat J.A."/>
            <person name="Gloeckner G."/>
            <person name="Rajandream M.A."/>
            <person name="Sucgang R."/>
            <person name="Berriman M."/>
            <person name="Song J."/>
            <person name="Olsen R."/>
            <person name="Szafranski K."/>
            <person name="Xu Q."/>
            <person name="Tunggal B."/>
            <person name="Kummerfeld S."/>
            <person name="Madera M."/>
            <person name="Konfortov B.A."/>
            <person name="Rivero F."/>
            <person name="Bankier A.T."/>
            <person name="Lehmann R."/>
            <person name="Hamlin N."/>
            <person name="Davies R."/>
            <person name="Gaudet P."/>
            <person name="Fey P."/>
            <person name="Pilcher K."/>
            <person name="Chen G."/>
            <person name="Saunders D."/>
            <person name="Sodergren E.J."/>
            <person name="Davis P."/>
            <person name="Kerhornou A."/>
            <person name="Nie X."/>
            <person name="Hall N."/>
            <person name="Anjard C."/>
            <person name="Hemphill L."/>
            <person name="Bason N."/>
            <person name="Farbrother P."/>
            <person name="Desany B."/>
            <person name="Just E."/>
            <person name="Morio T."/>
            <person name="Rost R."/>
            <person name="Churcher C.M."/>
            <person name="Cooper J."/>
            <person name="Haydock S."/>
            <person name="van Driessche N."/>
            <person name="Cronin A."/>
            <person name="Goodhead I."/>
            <person name="Muzny D.M."/>
            <person name="Mourier T."/>
            <person name="Pain A."/>
            <person name="Lu M."/>
            <person name="Harper D."/>
            <person name="Lindsay R."/>
            <person name="Hauser H."/>
            <person name="James K.D."/>
            <person name="Quiles M."/>
            <person name="Madan Babu M."/>
            <person name="Saito T."/>
            <person name="Buchrieser C."/>
            <person name="Wardroper A."/>
            <person name="Felder M."/>
            <person name="Thangavelu M."/>
            <person name="Johnson D."/>
            <person name="Knights A."/>
            <person name="Loulseged H."/>
            <person name="Mungall K.L."/>
            <person name="Oliver K."/>
            <person name="Price C."/>
            <person name="Quail M.A."/>
            <person name="Urushihara H."/>
            <person name="Hernandez J."/>
            <person name="Rabbinowitsch E."/>
            <person name="Steffen D."/>
            <person name="Sanders M."/>
            <person name="Ma J."/>
            <person name="Kohara Y."/>
            <person name="Sharp S."/>
            <person name="Simmonds M.N."/>
            <person name="Spiegler S."/>
            <person name="Tivey A."/>
            <person name="Sugano S."/>
            <person name="White B."/>
            <person name="Walker D."/>
            <person name="Woodward J.R."/>
            <person name="Winckler T."/>
            <person name="Tanaka Y."/>
            <person name="Shaulsky G."/>
            <person name="Schleicher M."/>
            <person name="Weinstock G.M."/>
            <person name="Rosenthal A."/>
            <person name="Cox E.C."/>
            <person name="Chisholm R.L."/>
            <person name="Gibbs R.A."/>
            <person name="Loomis W.F."/>
            <person name="Platzer M."/>
            <person name="Kay R.R."/>
            <person name="Williams J.G."/>
            <person name="Dear P.H."/>
            <person name="Noegel A.A."/>
            <person name="Barrell B.G."/>
            <person name="Kuspa A."/>
        </authorList>
    </citation>
    <scope>NUCLEOTIDE SEQUENCE [LARGE SCALE GENOMIC DNA]</scope>
    <source>
        <strain>AX4</strain>
    </source>
</reference>
<organism>
    <name type="scientific">Dictyostelium discoideum</name>
    <name type="common">Social amoeba</name>
    <dbReference type="NCBI Taxonomy" id="44689"/>
    <lineage>
        <taxon>Eukaryota</taxon>
        <taxon>Amoebozoa</taxon>
        <taxon>Evosea</taxon>
        <taxon>Eumycetozoa</taxon>
        <taxon>Dictyostelia</taxon>
        <taxon>Dictyosteliales</taxon>
        <taxon>Dictyosteliaceae</taxon>
        <taxon>Dictyostelium</taxon>
    </lineage>
</organism>
<keyword id="KW-1185">Reference proteome</keyword>
<name>Y6190_DICDI</name>
<feature type="chain" id="PRO_0000350785" description="Uncharacterized protein DDB_G0284781">
    <location>
        <begin position="1"/>
        <end position="120"/>
    </location>
</feature>
<accession>Q54P56</accession>